<protein>
    <recommendedName>
        <fullName evidence="1">Integration host factor subunit alpha</fullName>
        <shortName evidence="1">IHF-alpha</shortName>
    </recommendedName>
</protein>
<reference key="1">
    <citation type="submission" date="2008-08" db="EMBL/GenBank/DDBJ databases">
        <title>Complete sequence of Anaeromyxobacter sp. K.</title>
        <authorList>
            <consortium name="US DOE Joint Genome Institute"/>
            <person name="Lucas S."/>
            <person name="Copeland A."/>
            <person name="Lapidus A."/>
            <person name="Glavina del Rio T."/>
            <person name="Dalin E."/>
            <person name="Tice H."/>
            <person name="Bruce D."/>
            <person name="Goodwin L."/>
            <person name="Pitluck S."/>
            <person name="Saunders E."/>
            <person name="Brettin T."/>
            <person name="Detter J.C."/>
            <person name="Han C."/>
            <person name="Larimer F."/>
            <person name="Land M."/>
            <person name="Hauser L."/>
            <person name="Kyrpides N."/>
            <person name="Ovchinnikiva G."/>
            <person name="Beliaev A."/>
        </authorList>
    </citation>
    <scope>NUCLEOTIDE SEQUENCE [LARGE SCALE GENOMIC DNA]</scope>
    <source>
        <strain>K</strain>
    </source>
</reference>
<comment type="function">
    <text evidence="1">This protein is one of the two subunits of integration host factor, a specific DNA-binding protein that functions in genetic recombination as well as in transcriptional and translational control.</text>
</comment>
<comment type="subunit">
    <text evidence="1">Heterodimer of an alpha and a beta chain.</text>
</comment>
<comment type="similarity">
    <text evidence="1">Belongs to the bacterial histone-like protein family.</text>
</comment>
<dbReference type="EMBL" id="CP001131">
    <property type="protein sequence ID" value="ACG73137.1"/>
    <property type="molecule type" value="Genomic_DNA"/>
</dbReference>
<dbReference type="RefSeq" id="WP_012525951.1">
    <property type="nucleotide sequence ID" value="NC_011145.1"/>
</dbReference>
<dbReference type="SMR" id="B4UAP1"/>
<dbReference type="KEGG" id="ank:AnaeK_1909"/>
<dbReference type="HOGENOM" id="CLU_105066_1_3_7"/>
<dbReference type="OrthoDB" id="9797747at2"/>
<dbReference type="Proteomes" id="UP000001871">
    <property type="component" value="Chromosome"/>
</dbReference>
<dbReference type="GO" id="GO:0005829">
    <property type="term" value="C:cytosol"/>
    <property type="evidence" value="ECO:0007669"/>
    <property type="project" value="TreeGrafter"/>
</dbReference>
<dbReference type="GO" id="GO:0003677">
    <property type="term" value="F:DNA binding"/>
    <property type="evidence" value="ECO:0007669"/>
    <property type="project" value="UniProtKB-UniRule"/>
</dbReference>
<dbReference type="GO" id="GO:0030527">
    <property type="term" value="F:structural constituent of chromatin"/>
    <property type="evidence" value="ECO:0007669"/>
    <property type="project" value="InterPro"/>
</dbReference>
<dbReference type="GO" id="GO:0006310">
    <property type="term" value="P:DNA recombination"/>
    <property type="evidence" value="ECO:0007669"/>
    <property type="project" value="UniProtKB-UniRule"/>
</dbReference>
<dbReference type="GO" id="GO:0009893">
    <property type="term" value="P:positive regulation of metabolic process"/>
    <property type="evidence" value="ECO:0007669"/>
    <property type="project" value="UniProtKB-ARBA"/>
</dbReference>
<dbReference type="GO" id="GO:0006355">
    <property type="term" value="P:regulation of DNA-templated transcription"/>
    <property type="evidence" value="ECO:0007669"/>
    <property type="project" value="UniProtKB-UniRule"/>
</dbReference>
<dbReference type="GO" id="GO:0006417">
    <property type="term" value="P:regulation of translation"/>
    <property type="evidence" value="ECO:0007669"/>
    <property type="project" value="UniProtKB-UniRule"/>
</dbReference>
<dbReference type="CDD" id="cd13835">
    <property type="entry name" value="IHF_A"/>
    <property type="match status" value="1"/>
</dbReference>
<dbReference type="FunFam" id="4.10.520.10:FF:000010">
    <property type="entry name" value="Integration host factor subunit alpha"/>
    <property type="match status" value="1"/>
</dbReference>
<dbReference type="Gene3D" id="4.10.520.10">
    <property type="entry name" value="IHF-like DNA-binding proteins"/>
    <property type="match status" value="1"/>
</dbReference>
<dbReference type="HAMAP" id="MF_00380">
    <property type="entry name" value="IHF_alpha"/>
    <property type="match status" value="1"/>
</dbReference>
<dbReference type="InterPro" id="IPR000119">
    <property type="entry name" value="Hist_DNA-bd"/>
</dbReference>
<dbReference type="InterPro" id="IPR020816">
    <property type="entry name" value="Histone-like_DNA-bd_CS"/>
</dbReference>
<dbReference type="InterPro" id="IPR010992">
    <property type="entry name" value="IHF-like_DNA-bd_dom_sf"/>
</dbReference>
<dbReference type="InterPro" id="IPR005684">
    <property type="entry name" value="IHF_alpha"/>
</dbReference>
<dbReference type="NCBIfam" id="TIGR00987">
    <property type="entry name" value="himA"/>
    <property type="match status" value="1"/>
</dbReference>
<dbReference type="NCBIfam" id="NF001401">
    <property type="entry name" value="PRK00285.1"/>
    <property type="match status" value="1"/>
</dbReference>
<dbReference type="PANTHER" id="PTHR33175">
    <property type="entry name" value="DNA-BINDING PROTEIN HU"/>
    <property type="match status" value="1"/>
</dbReference>
<dbReference type="PANTHER" id="PTHR33175:SF2">
    <property type="entry name" value="INTEGRATION HOST FACTOR SUBUNIT ALPHA"/>
    <property type="match status" value="1"/>
</dbReference>
<dbReference type="Pfam" id="PF00216">
    <property type="entry name" value="Bac_DNA_binding"/>
    <property type="match status" value="1"/>
</dbReference>
<dbReference type="PRINTS" id="PR01727">
    <property type="entry name" value="DNABINDINGHU"/>
</dbReference>
<dbReference type="SMART" id="SM00411">
    <property type="entry name" value="BHL"/>
    <property type="match status" value="1"/>
</dbReference>
<dbReference type="SUPFAM" id="SSF47729">
    <property type="entry name" value="IHF-like DNA-binding proteins"/>
    <property type="match status" value="1"/>
</dbReference>
<dbReference type="PROSITE" id="PS00045">
    <property type="entry name" value="HISTONE_LIKE"/>
    <property type="match status" value="1"/>
</dbReference>
<proteinExistence type="inferred from homology"/>
<organism>
    <name type="scientific">Anaeromyxobacter sp. (strain K)</name>
    <dbReference type="NCBI Taxonomy" id="447217"/>
    <lineage>
        <taxon>Bacteria</taxon>
        <taxon>Pseudomonadati</taxon>
        <taxon>Myxococcota</taxon>
        <taxon>Myxococcia</taxon>
        <taxon>Myxococcales</taxon>
        <taxon>Cystobacterineae</taxon>
        <taxon>Anaeromyxobacteraceae</taxon>
        <taxon>Anaeromyxobacter</taxon>
    </lineage>
</organism>
<name>IHFA_ANASK</name>
<gene>
    <name evidence="1" type="primary">ihfA</name>
    <name evidence="1" type="synonym">himA</name>
    <name type="ordered locus">AnaeK_1909</name>
</gene>
<keyword id="KW-0233">DNA recombination</keyword>
<keyword id="KW-0238">DNA-binding</keyword>
<keyword id="KW-0804">Transcription</keyword>
<keyword id="KW-0805">Transcription regulation</keyword>
<keyword id="KW-0810">Translation regulation</keyword>
<sequence>MTKADIIESVYEKVGFSKKEAAEIVEMVFDTIKETLERGEKIKISGFGNFIVRDKKSRVGRNPQTGEEIEISARRVLTFRPSQVLKNALNGEVSDETTEGADDDDDEEGEGDE</sequence>
<evidence type="ECO:0000255" key="1">
    <source>
        <dbReference type="HAMAP-Rule" id="MF_00380"/>
    </source>
</evidence>
<evidence type="ECO:0000256" key="2">
    <source>
        <dbReference type="SAM" id="MobiDB-lite"/>
    </source>
</evidence>
<feature type="chain" id="PRO_1000122129" description="Integration host factor subunit alpha">
    <location>
        <begin position="1"/>
        <end position="113"/>
    </location>
</feature>
<feature type="region of interest" description="Disordered" evidence="2">
    <location>
        <begin position="87"/>
        <end position="113"/>
    </location>
</feature>
<feature type="compositionally biased region" description="Acidic residues" evidence="2">
    <location>
        <begin position="93"/>
        <end position="113"/>
    </location>
</feature>
<accession>B4UAP1</accession>